<proteinExistence type="evidence at protein level"/>
<name>GPX1_MOUSE</name>
<evidence type="ECO:0000250" key="1">
    <source>
        <dbReference type="UniProtKB" id="O70325"/>
    </source>
</evidence>
<evidence type="ECO:0000250" key="2">
    <source>
        <dbReference type="UniProtKB" id="P04041"/>
    </source>
</evidence>
<evidence type="ECO:0000250" key="3">
    <source>
        <dbReference type="UniProtKB" id="P07203"/>
    </source>
</evidence>
<evidence type="ECO:0000269" key="4">
    <source>
    </source>
</evidence>
<evidence type="ECO:0000269" key="5">
    <source>
    </source>
</evidence>
<evidence type="ECO:0000269" key="6">
    <source>
    </source>
</evidence>
<evidence type="ECO:0000269" key="7">
    <source>
    </source>
</evidence>
<evidence type="ECO:0000269" key="8">
    <source>
    </source>
</evidence>
<evidence type="ECO:0000269" key="9">
    <source>
    </source>
</evidence>
<evidence type="ECO:0000269" key="10">
    <source>
    </source>
</evidence>
<evidence type="ECO:0000269" key="11">
    <source>
    </source>
</evidence>
<evidence type="ECO:0000303" key="12">
    <source>
    </source>
</evidence>
<evidence type="ECO:0000305" key="13"/>
<evidence type="ECO:0000305" key="14">
    <source>
    </source>
</evidence>
<evidence type="ECO:0000305" key="15">
    <source>
    </source>
</evidence>
<evidence type="ECO:0000305" key="16">
    <source>
    </source>
</evidence>
<evidence type="ECO:0000305" key="17">
    <source>
    </source>
</evidence>
<evidence type="ECO:0000312" key="18">
    <source>
        <dbReference type="MGI" id="MGI:104887"/>
    </source>
</evidence>
<evidence type="ECO:0007744" key="19">
    <source>
    </source>
</evidence>
<evidence type="ECO:0007744" key="20">
    <source>
    </source>
</evidence>
<evidence type="ECO:0007744" key="21">
    <source>
    </source>
</evidence>
<gene>
    <name evidence="18" type="primary">Gpx1</name>
</gene>
<accession>P11352</accession>
<accession>P12079</accession>
<accession>Q544W3</accession>
<accession>Q5RJH8</accession>
<accession>Q9CR54</accession>
<reference key="1">
    <citation type="journal article" date="1986" name="EMBO J.">
        <title>The structure of the mouse glutathione peroxidase gene: the selenocysteine in the active site is encoded by the 'termination' codon, TGA.</title>
        <authorList>
            <person name="Chambers I."/>
            <person name="Frampton J."/>
            <person name="Goldfarb P."/>
            <person name="Affara N."/>
            <person name="McBain W."/>
            <person name="Harrison P.R."/>
        </authorList>
    </citation>
    <scope>NUCLEOTIDE SEQUENCE [GENOMIC DNA]</scope>
    <scope>SELENOCYSTEINE AT SEC-47</scope>
    <source>
        <tissue>Erythrocyte</tissue>
    </source>
</reference>
<reference key="2">
    <citation type="journal article" date="2005" name="Science">
        <title>The transcriptional landscape of the mammalian genome.</title>
        <authorList>
            <person name="Carninci P."/>
            <person name="Kasukawa T."/>
            <person name="Katayama S."/>
            <person name="Gough J."/>
            <person name="Frith M.C."/>
            <person name="Maeda N."/>
            <person name="Oyama R."/>
            <person name="Ravasi T."/>
            <person name="Lenhard B."/>
            <person name="Wells C."/>
            <person name="Kodzius R."/>
            <person name="Shimokawa K."/>
            <person name="Bajic V.B."/>
            <person name="Brenner S.E."/>
            <person name="Batalov S."/>
            <person name="Forrest A.R."/>
            <person name="Zavolan M."/>
            <person name="Davis M.J."/>
            <person name="Wilming L.G."/>
            <person name="Aidinis V."/>
            <person name="Allen J.E."/>
            <person name="Ambesi-Impiombato A."/>
            <person name="Apweiler R."/>
            <person name="Aturaliya R.N."/>
            <person name="Bailey T.L."/>
            <person name="Bansal M."/>
            <person name="Baxter L."/>
            <person name="Beisel K.W."/>
            <person name="Bersano T."/>
            <person name="Bono H."/>
            <person name="Chalk A.M."/>
            <person name="Chiu K.P."/>
            <person name="Choudhary V."/>
            <person name="Christoffels A."/>
            <person name="Clutterbuck D.R."/>
            <person name="Crowe M.L."/>
            <person name="Dalla E."/>
            <person name="Dalrymple B.P."/>
            <person name="de Bono B."/>
            <person name="Della Gatta G."/>
            <person name="di Bernardo D."/>
            <person name="Down T."/>
            <person name="Engstrom P."/>
            <person name="Fagiolini M."/>
            <person name="Faulkner G."/>
            <person name="Fletcher C.F."/>
            <person name="Fukushima T."/>
            <person name="Furuno M."/>
            <person name="Futaki S."/>
            <person name="Gariboldi M."/>
            <person name="Georgii-Hemming P."/>
            <person name="Gingeras T.R."/>
            <person name="Gojobori T."/>
            <person name="Green R.E."/>
            <person name="Gustincich S."/>
            <person name="Harbers M."/>
            <person name="Hayashi Y."/>
            <person name="Hensch T.K."/>
            <person name="Hirokawa N."/>
            <person name="Hill D."/>
            <person name="Huminiecki L."/>
            <person name="Iacono M."/>
            <person name="Ikeo K."/>
            <person name="Iwama A."/>
            <person name="Ishikawa T."/>
            <person name="Jakt M."/>
            <person name="Kanapin A."/>
            <person name="Katoh M."/>
            <person name="Kawasawa Y."/>
            <person name="Kelso J."/>
            <person name="Kitamura H."/>
            <person name="Kitano H."/>
            <person name="Kollias G."/>
            <person name="Krishnan S.P."/>
            <person name="Kruger A."/>
            <person name="Kummerfeld S.K."/>
            <person name="Kurochkin I.V."/>
            <person name="Lareau L.F."/>
            <person name="Lazarevic D."/>
            <person name="Lipovich L."/>
            <person name="Liu J."/>
            <person name="Liuni S."/>
            <person name="McWilliam S."/>
            <person name="Madan Babu M."/>
            <person name="Madera M."/>
            <person name="Marchionni L."/>
            <person name="Matsuda H."/>
            <person name="Matsuzawa S."/>
            <person name="Miki H."/>
            <person name="Mignone F."/>
            <person name="Miyake S."/>
            <person name="Morris K."/>
            <person name="Mottagui-Tabar S."/>
            <person name="Mulder N."/>
            <person name="Nakano N."/>
            <person name="Nakauchi H."/>
            <person name="Ng P."/>
            <person name="Nilsson R."/>
            <person name="Nishiguchi S."/>
            <person name="Nishikawa S."/>
            <person name="Nori F."/>
            <person name="Ohara O."/>
            <person name="Okazaki Y."/>
            <person name="Orlando V."/>
            <person name="Pang K.C."/>
            <person name="Pavan W.J."/>
            <person name="Pavesi G."/>
            <person name="Pesole G."/>
            <person name="Petrovsky N."/>
            <person name="Piazza S."/>
            <person name="Reed J."/>
            <person name="Reid J.F."/>
            <person name="Ring B.Z."/>
            <person name="Ringwald M."/>
            <person name="Rost B."/>
            <person name="Ruan Y."/>
            <person name="Salzberg S.L."/>
            <person name="Sandelin A."/>
            <person name="Schneider C."/>
            <person name="Schoenbach C."/>
            <person name="Sekiguchi K."/>
            <person name="Semple C.A."/>
            <person name="Seno S."/>
            <person name="Sessa L."/>
            <person name="Sheng Y."/>
            <person name="Shibata Y."/>
            <person name="Shimada H."/>
            <person name="Shimada K."/>
            <person name="Silva D."/>
            <person name="Sinclair B."/>
            <person name="Sperling S."/>
            <person name="Stupka E."/>
            <person name="Sugiura K."/>
            <person name="Sultana R."/>
            <person name="Takenaka Y."/>
            <person name="Taki K."/>
            <person name="Tammoja K."/>
            <person name="Tan S.L."/>
            <person name="Tang S."/>
            <person name="Taylor M.S."/>
            <person name="Tegner J."/>
            <person name="Teichmann S.A."/>
            <person name="Ueda H.R."/>
            <person name="van Nimwegen E."/>
            <person name="Verardo R."/>
            <person name="Wei C.L."/>
            <person name="Yagi K."/>
            <person name="Yamanishi H."/>
            <person name="Zabarovsky E."/>
            <person name="Zhu S."/>
            <person name="Zimmer A."/>
            <person name="Hide W."/>
            <person name="Bult C."/>
            <person name="Grimmond S.M."/>
            <person name="Teasdale R.D."/>
            <person name="Liu E.T."/>
            <person name="Brusic V."/>
            <person name="Quackenbush J."/>
            <person name="Wahlestedt C."/>
            <person name="Mattick J.S."/>
            <person name="Hume D.A."/>
            <person name="Kai C."/>
            <person name="Sasaki D."/>
            <person name="Tomaru Y."/>
            <person name="Fukuda S."/>
            <person name="Kanamori-Katayama M."/>
            <person name="Suzuki M."/>
            <person name="Aoki J."/>
            <person name="Arakawa T."/>
            <person name="Iida J."/>
            <person name="Imamura K."/>
            <person name="Itoh M."/>
            <person name="Kato T."/>
            <person name="Kawaji H."/>
            <person name="Kawagashira N."/>
            <person name="Kawashima T."/>
            <person name="Kojima M."/>
            <person name="Kondo S."/>
            <person name="Konno H."/>
            <person name="Nakano K."/>
            <person name="Ninomiya N."/>
            <person name="Nishio T."/>
            <person name="Okada M."/>
            <person name="Plessy C."/>
            <person name="Shibata K."/>
            <person name="Shiraki T."/>
            <person name="Suzuki S."/>
            <person name="Tagami M."/>
            <person name="Waki K."/>
            <person name="Watahiki A."/>
            <person name="Okamura-Oho Y."/>
            <person name="Suzuki H."/>
            <person name="Kawai J."/>
            <person name="Hayashizaki Y."/>
        </authorList>
    </citation>
    <scope>NUCLEOTIDE SEQUENCE [LARGE SCALE MRNA]</scope>
    <source>
        <strain>C57BL/6J</strain>
        <strain>NOD</strain>
        <tissue>Bone marrow</tissue>
        <tissue>Embryonic liver</tissue>
        <tissue>Kidney</tissue>
        <tissue>Liver</tissue>
    </source>
</reference>
<reference key="3">
    <citation type="journal article" date="2004" name="Genome Res.">
        <title>The status, quality, and expansion of the NIH full-length cDNA project: the Mammalian Gene Collection (MGC).</title>
        <authorList>
            <consortium name="The MGC Project Team"/>
        </authorList>
    </citation>
    <scope>NUCLEOTIDE SEQUENCE [LARGE SCALE MRNA]</scope>
    <source>
        <strain>C57BL/6J</strain>
        <tissue>Brain</tissue>
    </source>
</reference>
<reference key="4">
    <citation type="journal article" date="1989" name="Nucleic Acids Res.">
        <title>A human cDNA sequence for a novel glutathione peroxidase-related selenopeptide, GPRP.</title>
        <authorList>
            <person name="Dunn D.K."/>
            <person name="Howells D.D."/>
            <person name="Richardson J."/>
            <person name="Goldfarb P.S."/>
        </authorList>
    </citation>
    <scope>PARTIAL NUCLEOTIDE SEQUENCE [MRNA]</scope>
    <source>
        <tissue>Liver</tissue>
    </source>
</reference>
<reference key="5">
    <citation type="journal article" date="1997" name="Arch. Biochem. Biophys.">
        <title>The Gpx1 gene encodes mitochondrial glutathione peroxidase in the mouse liver.</title>
        <authorList>
            <person name="Esworthy R.S."/>
            <person name="Ho Y.S."/>
            <person name="Chu F.F."/>
        </authorList>
    </citation>
    <scope>FUNCTION</scope>
    <scope>CATALYTIC ACTIVITY</scope>
    <scope>SUBCELLULAR LOCATION</scope>
    <scope>TISSUE SPECIFICITY</scope>
</reference>
<reference key="6">
    <citation type="journal article" date="1997" name="J. Biol. Chem.">
        <title>Mice deficient in cellular glutathione peroxidase develop normally and show no increased sensitivity to hyperoxia.</title>
        <authorList>
            <person name="Ho Y.S."/>
            <person name="Magnenat J.L."/>
            <person name="Bronson R.T."/>
            <person name="Cao J."/>
            <person name="Gargano M."/>
            <person name="Sugawara M."/>
            <person name="Funk C.D."/>
        </authorList>
    </citation>
    <scope>CATALYTIC ACTIVITY</scope>
    <scope>DISRUPTION PHENOTYPE</scope>
    <scope>FUNCTION</scope>
    <scope>TISSUE SPECIFICITY</scope>
</reference>
<reference key="7">
    <citation type="journal article" date="1998" name="J. Biol. Chem.">
        <title>Mice with a homozygous null mutation for the most abundant glutathione peroxidase, Gpx1, show increased susceptibility to the oxidative stress-inducing agents paraquat and hydrogen peroxide.</title>
        <authorList>
            <person name="de Haan J.B."/>
            <person name="Bladier C."/>
            <person name="Griffiths P."/>
            <person name="Kelner M."/>
            <person name="O'Shea R.D."/>
            <person name="Cheung N.S."/>
            <person name="Bronson R.T."/>
            <person name="Silvestro M.J."/>
            <person name="Wild S."/>
            <person name="Zheng S.S."/>
            <person name="Beart P.M."/>
            <person name="Hertzog P.J."/>
            <person name="Kola I."/>
        </authorList>
    </citation>
    <scope>FUNCTION</scope>
    <scope>CATALYTIC ACTIVITY</scope>
    <scope>DISRUPTION PHENOTYPE</scope>
    <scope>TISSUE SPECIFICITY</scope>
</reference>
<reference key="8">
    <citation type="journal article" date="2000" name="Free Radic. Biol. Med.">
        <title>Mitochondrial oxidative stress in mice lacking the glutathione peroxidase-1 gene.</title>
        <authorList>
            <person name="Esposito L.A."/>
            <person name="Kokoszka J.E."/>
            <person name="Waymire K.G."/>
            <person name="Cottrell B."/>
            <person name="MacGregor G.R."/>
            <person name="Wallace D.C."/>
        </authorList>
    </citation>
    <scope>FUNCTION</scope>
    <scope>CATALYTIC ACTIVITY</scope>
    <scope>DISRUPTION PHENOTYPE</scope>
    <scope>TISSUE SPECIFICITY</scope>
</reference>
<reference key="9">
    <citation type="journal article" date="2007" name="Biochemistry">
        <title>SelT, SelW, SelH, and Rdx12: genomics and molecular insights into the functions of selenoproteins of a novel thioredoxin-like family.</title>
        <authorList>
            <person name="Dikiy A."/>
            <person name="Novoselov S.V."/>
            <person name="Fomenko D.E."/>
            <person name="Sengupta A."/>
            <person name="Carlson B.A."/>
            <person name="Cerny R.L."/>
            <person name="Ginalski K."/>
            <person name="Grishin N.V."/>
            <person name="Hatfield D.L."/>
            <person name="Gladyshev V.N."/>
        </authorList>
    </citation>
    <scope>INTERACTION WITH MIEN1</scope>
</reference>
<reference key="10">
    <citation type="journal article" date="2007" name="Proc. Natl. Acad. Sci. U.S.A.">
        <title>Large-scale phosphorylation analysis of mouse liver.</title>
        <authorList>
            <person name="Villen J."/>
            <person name="Beausoleil S.A."/>
            <person name="Gerber S.A."/>
            <person name="Gygi S.P."/>
        </authorList>
    </citation>
    <scope>PHOSPHORYLATION [LARGE SCALE ANALYSIS] AT SER-7</scope>
    <scope>IDENTIFICATION BY MASS SPECTROMETRY [LARGE SCALE ANALYSIS]</scope>
    <source>
        <tissue>Liver</tissue>
    </source>
</reference>
<reference key="11">
    <citation type="journal article" date="2010" name="Cell">
        <title>A tissue-specific atlas of mouse protein phosphorylation and expression.</title>
        <authorList>
            <person name="Huttlin E.L."/>
            <person name="Jedrychowski M.P."/>
            <person name="Elias J.E."/>
            <person name="Goswami T."/>
            <person name="Rad R."/>
            <person name="Beausoleil S.A."/>
            <person name="Villen J."/>
            <person name="Haas W."/>
            <person name="Sowa M.E."/>
            <person name="Gygi S.P."/>
        </authorList>
    </citation>
    <scope>IDENTIFICATION BY MASS SPECTROMETRY [LARGE SCALE ANALYSIS]</scope>
    <source>
        <tissue>Brain</tissue>
        <tissue>Brown adipose tissue</tissue>
        <tissue>Heart</tissue>
        <tissue>Kidney</tissue>
        <tissue>Liver</tissue>
        <tissue>Lung</tissue>
        <tissue>Pancreas</tissue>
        <tissue>Spleen</tissue>
        <tissue>Testis</tissue>
    </source>
</reference>
<reference key="12">
    <citation type="journal article" date="2011" name="Free Radic. Biol. Med.">
        <title>Knockout of SOD1 promotes conversion of selenocysteine to dehydroalanine in murine hepatic GPX1 protein.</title>
        <authorList>
            <person name="Wang S.K."/>
            <person name="Weaver J.D."/>
            <person name="Zhang S."/>
            <person name="Lei X.G."/>
        </authorList>
    </citation>
    <scope>BIOPHYSICOCHEMICAL PROPERTIES</scope>
    <scope>SELENOCYSTEINE AT SEC-47</scope>
    <scope>PARTIAL LOSS OF SELENIUM IN ABSENCE OF SOD1</scope>
    <scope>IDENTIFICATION BY MASS SPECTROMETRY</scope>
    <scope>FUNCTION</scope>
    <scope>CATALYTIC ACTIVITY</scope>
    <source>
        <tissue>Liver</tissue>
    </source>
</reference>
<reference key="13">
    <citation type="journal article" date="2013" name="Mol. Cell">
        <title>SIRT5-mediated lysine desuccinylation impacts diverse metabolic pathways.</title>
        <authorList>
            <person name="Park J."/>
            <person name="Chen Y."/>
            <person name="Tishkoff D.X."/>
            <person name="Peng C."/>
            <person name="Tan M."/>
            <person name="Dai L."/>
            <person name="Xie Z."/>
            <person name="Zhang Y."/>
            <person name="Zwaans B.M."/>
            <person name="Skinner M.E."/>
            <person name="Lombard D.B."/>
            <person name="Zhao Y."/>
        </authorList>
    </citation>
    <scope>SUCCINYLATION [LARGE SCALE ANALYSIS] AT LYS-62; LYS-86; LYS-112 AND LYS-146</scope>
    <scope>IDENTIFICATION BY MASS SPECTROMETRY [LARGE SCALE ANALYSIS]</scope>
    <source>
        <tissue>Liver</tissue>
    </source>
</reference>
<reference key="14">
    <citation type="journal article" date="2013" name="Proc. Natl. Acad. Sci. U.S.A.">
        <title>Label-free quantitative proteomics of the lysine acetylome in mitochondria identifies substrates of SIRT3 in metabolic pathways.</title>
        <authorList>
            <person name="Rardin M.J."/>
            <person name="Newman J.C."/>
            <person name="Held J.M."/>
            <person name="Cusack M.P."/>
            <person name="Sorensen D.J."/>
            <person name="Li B."/>
            <person name="Schilling B."/>
            <person name="Mooney S.D."/>
            <person name="Kahn C.R."/>
            <person name="Verdin E."/>
            <person name="Gibson B.W."/>
        </authorList>
    </citation>
    <scope>ACETYLATION [LARGE SCALE ANALYSIS] AT LYS-62; LYS-86; LYS-112; LYS-119 AND LYS-146</scope>
    <scope>IDENTIFICATION BY MASS SPECTROMETRY [LARGE SCALE ANALYSIS]</scope>
    <source>
        <tissue>Liver</tissue>
    </source>
</reference>
<reference key="15">
    <citation type="journal article" date="2020" name="Proc. Natl. Acad. Sci. U.S.A.">
        <title>Facultative protein selenation regulates redox sensitivity, adipose tissue thermogenesis, and obesity.</title>
        <authorList>
            <person name="Jedrychowski M.P."/>
            <person name="Lu G.Z."/>
            <person name="Szpyt J."/>
            <person name="Mariotti M."/>
            <person name="Garrity R."/>
            <person name="Paulo J.A."/>
            <person name="Schweppe D.K."/>
            <person name="Laznik-Bogoslavski D."/>
            <person name="Kazak L."/>
            <person name="Murphy M.P."/>
            <person name="Gladyshev V.N."/>
            <person name="Gygi S.P."/>
            <person name="Chouchani E.T."/>
            <person name="Spiegelman B.M."/>
        </authorList>
    </citation>
    <scope>SELENOCYSTEINE AT SEC-47</scope>
</reference>
<reference key="16">
    <citation type="journal article" date="2023" name="Redox Biol.">
        <title>Side-by-side comparison of recombinant human glutathione peroxidases identifies overlapping substrate specificities for soluble hydroperoxides.</title>
        <authorList>
            <person name="Schwarz M."/>
            <person name="Loeser A."/>
            <person name="Cheng Q."/>
            <person name="Wichmann-Costaganna M."/>
            <person name="Schaedel P."/>
            <person name="Werz O."/>
            <person name="Arner E.S."/>
            <person name="Kipp A.P."/>
        </authorList>
    </citation>
    <scope>FUNCTION</scope>
    <scope>CATALYTIC ACTIVITY</scope>
</reference>
<keyword id="KW-0007">Acetylation</keyword>
<keyword id="KW-0963">Cytoplasm</keyword>
<keyword id="KW-0443">Lipid metabolism</keyword>
<keyword id="KW-0496">Mitochondrion</keyword>
<keyword id="KW-0560">Oxidoreductase</keyword>
<keyword id="KW-0575">Peroxidase</keyword>
<keyword id="KW-0597">Phosphoprotein</keyword>
<keyword id="KW-1185">Reference proteome</keyword>
<keyword id="KW-0712">Selenocysteine</keyword>
<organism>
    <name type="scientific">Mus musculus</name>
    <name type="common">Mouse</name>
    <dbReference type="NCBI Taxonomy" id="10090"/>
    <lineage>
        <taxon>Eukaryota</taxon>
        <taxon>Metazoa</taxon>
        <taxon>Chordata</taxon>
        <taxon>Craniata</taxon>
        <taxon>Vertebrata</taxon>
        <taxon>Euteleostomi</taxon>
        <taxon>Mammalia</taxon>
        <taxon>Eutheria</taxon>
        <taxon>Euarchontoglires</taxon>
        <taxon>Glires</taxon>
        <taxon>Rodentia</taxon>
        <taxon>Myomorpha</taxon>
        <taxon>Muroidea</taxon>
        <taxon>Muridae</taxon>
        <taxon>Murinae</taxon>
        <taxon>Mus</taxon>
        <taxon>Mus</taxon>
    </lineage>
</organism>
<sequence>MCAARLSAAAQSTVYAFSARPLTGGEPVSLGSLRGKVLLIENVASLUGTTIRDYTEMNDLQKRLGPRGLVVLGFPCNQFGHQENGKNEEILNSLKYVRPGGGFEPNFTLFEKCEVNGEKAHPLFTFLRNALPTPSDDPTALMTDPKYIIWSPVCRNDIAWNFEKFLVGPDGVPVRRYSRRFRTIDIEPDIETLLSQQSGNS</sequence>
<feature type="chain" id="PRO_0000066613" description="Glutathione peroxidase 1">
    <location>
        <begin position="1"/>
        <end position="201"/>
    </location>
</feature>
<feature type="active site" evidence="1">
    <location>
        <position position="47"/>
    </location>
</feature>
<feature type="site" description="Subject to oxidation and hydroselenide loss to dehydroalanine">
    <location>
        <position position="47"/>
    </location>
</feature>
<feature type="non-standard amino acid" description="Selenocysteine" evidence="7">
    <location>
        <position position="47"/>
    </location>
</feature>
<feature type="modified residue" description="Phosphoserine" evidence="19">
    <location>
        <position position="7"/>
    </location>
</feature>
<feature type="modified residue" description="Phosphoserine" evidence="2">
    <location>
        <position position="32"/>
    </location>
</feature>
<feature type="modified residue" description="N6-acetyllysine; alternate" evidence="20">
    <location>
        <position position="62"/>
    </location>
</feature>
<feature type="modified residue" description="N6-succinyllysine; alternate" evidence="21">
    <location>
        <position position="62"/>
    </location>
</feature>
<feature type="modified residue" description="N6-acetyllysine; alternate" evidence="20">
    <location>
        <position position="86"/>
    </location>
</feature>
<feature type="modified residue" description="N6-succinyllysine; alternate" evidence="21">
    <location>
        <position position="86"/>
    </location>
</feature>
<feature type="modified residue" description="N6-acetyllysine; alternate" evidence="20">
    <location>
        <position position="112"/>
    </location>
</feature>
<feature type="modified residue" description="N6-succinyllysine; alternate" evidence="21">
    <location>
        <position position="112"/>
    </location>
</feature>
<feature type="modified residue" description="N6-acetyllysine" evidence="20">
    <location>
        <position position="119"/>
    </location>
</feature>
<feature type="modified residue" description="N6-acetyllysine; alternate" evidence="20">
    <location>
        <position position="146"/>
    </location>
</feature>
<feature type="modified residue" description="N6-succinyllysine; alternate" evidence="21">
    <location>
        <position position="146"/>
    </location>
</feature>
<feature type="modified residue" description="Phosphoserine" evidence="2">
    <location>
        <position position="195"/>
    </location>
</feature>
<comment type="function">
    <text evidence="4 6 8 9 10 11">Catalyzes the reduction of hydroperoxides in a glutathione-dependent manner thus regulating cellular redox homeostasis (PubMed:10754271, PubMed:21420488, PubMed:36608588, PubMed:9126277, PubMed:9195979, PubMed:9712879). Can reduce small soluble hydroperoxides such as H2O2, cumene hydroperoxide and tert-butyl hydroperoxide, as well as several fatty acid-derived hydroperoxides (PubMed:10754271, PubMed:21420488, PubMed:36608588, PubMed:9126277, PubMed:9195979, PubMed:9712879). In platelets catalyzes the reduction of 12-hydroperoxyeicosatetraenoic acid, the primary product of the arachidonate 12-lipoxygenase pathway (PubMed:9195979).</text>
</comment>
<comment type="catalytic activity">
    <reaction evidence="4 6 8 9 11 17">
        <text>2 glutathione + H2O2 = glutathione disulfide + 2 H2O</text>
        <dbReference type="Rhea" id="RHEA:16833"/>
        <dbReference type="ChEBI" id="CHEBI:15377"/>
        <dbReference type="ChEBI" id="CHEBI:16240"/>
        <dbReference type="ChEBI" id="CHEBI:57925"/>
        <dbReference type="ChEBI" id="CHEBI:58297"/>
        <dbReference type="EC" id="1.11.1.9"/>
    </reaction>
    <physiologicalReaction direction="left-to-right" evidence="17">
        <dbReference type="Rhea" id="RHEA:16834"/>
    </physiologicalReaction>
</comment>
<comment type="catalytic activity">
    <reaction evidence="8 10">
        <text>a hydroperoxy polyunsaturated fatty acid + 2 glutathione = a hydroxy polyunsaturated fatty acid + glutathione disulfide + H2O</text>
        <dbReference type="Rhea" id="RHEA:19057"/>
        <dbReference type="ChEBI" id="CHEBI:15377"/>
        <dbReference type="ChEBI" id="CHEBI:57925"/>
        <dbReference type="ChEBI" id="CHEBI:58297"/>
        <dbReference type="ChEBI" id="CHEBI:131871"/>
        <dbReference type="ChEBI" id="CHEBI:134019"/>
        <dbReference type="EC" id="1.11.1.12"/>
    </reaction>
    <physiologicalReaction direction="left-to-right" evidence="15">
        <dbReference type="Rhea" id="RHEA:19058"/>
    </physiologicalReaction>
</comment>
<comment type="catalytic activity">
    <reaction evidence="6 9">
        <text>tert-butyl hydroperoxide + 2 glutathione = tert-butanol + glutathione disulfide + H2O</text>
        <dbReference type="Rhea" id="RHEA:69412"/>
        <dbReference type="ChEBI" id="CHEBI:15377"/>
        <dbReference type="ChEBI" id="CHEBI:45895"/>
        <dbReference type="ChEBI" id="CHEBI:57925"/>
        <dbReference type="ChEBI" id="CHEBI:58297"/>
        <dbReference type="ChEBI" id="CHEBI:64090"/>
    </reaction>
    <physiologicalReaction direction="left-to-right" evidence="16">
        <dbReference type="Rhea" id="RHEA:69413"/>
    </physiologicalReaction>
</comment>
<comment type="catalytic activity">
    <reaction evidence="9">
        <text>cumene hydroperoxide + 2 glutathione = 2-phenylpropan-2-ol + glutathione disulfide + H2O</text>
        <dbReference type="Rhea" id="RHEA:69651"/>
        <dbReference type="ChEBI" id="CHEBI:15377"/>
        <dbReference type="ChEBI" id="CHEBI:57925"/>
        <dbReference type="ChEBI" id="CHEBI:58297"/>
        <dbReference type="ChEBI" id="CHEBI:78673"/>
        <dbReference type="ChEBI" id="CHEBI:131607"/>
    </reaction>
    <physiologicalReaction direction="left-to-right" evidence="16">
        <dbReference type="Rhea" id="RHEA:69652"/>
    </physiologicalReaction>
</comment>
<comment type="catalytic activity">
    <reaction evidence="3">
        <text>(13S)-hydroperoxy-(9Z,11E)-octadecadienoate + 2 glutathione = (13S)-hydroxy-(9Z,11E)-octadecadienoate + glutathione disulfide + H2O</text>
        <dbReference type="Rhea" id="RHEA:48888"/>
        <dbReference type="ChEBI" id="CHEBI:15377"/>
        <dbReference type="ChEBI" id="CHEBI:57466"/>
        <dbReference type="ChEBI" id="CHEBI:57925"/>
        <dbReference type="ChEBI" id="CHEBI:58297"/>
        <dbReference type="ChEBI" id="CHEBI:90850"/>
    </reaction>
    <physiologicalReaction direction="left-to-right" evidence="3">
        <dbReference type="Rhea" id="RHEA:48889"/>
    </physiologicalReaction>
</comment>
<comment type="catalytic activity">
    <reaction evidence="3">
        <text>(9S)-hydroperoxy-(10E,12Z)-octadecadienoate + 2 glutathione = (9S)-hydroxy-(10E,12Z)-octadecadienoate + glutathione disulfide + H2O</text>
        <dbReference type="Rhea" id="RHEA:76687"/>
        <dbReference type="ChEBI" id="CHEBI:15377"/>
        <dbReference type="ChEBI" id="CHEBI:57925"/>
        <dbReference type="ChEBI" id="CHEBI:58297"/>
        <dbReference type="ChEBI" id="CHEBI:60955"/>
        <dbReference type="ChEBI" id="CHEBI:77852"/>
    </reaction>
    <physiologicalReaction direction="left-to-right" evidence="3">
        <dbReference type="Rhea" id="RHEA:76688"/>
    </physiologicalReaction>
</comment>
<comment type="catalytic activity">
    <reaction evidence="3">
        <text>(5S)-hydroperoxy-(6E,8Z,11Z,14Z)-eicosatetraenoate + 2 glutathione = (5S)-hydroxy-(6E,8Z,11Z,14Z)-eicosatetraenoate + glutathione disulfide + H2O</text>
        <dbReference type="Rhea" id="RHEA:48620"/>
        <dbReference type="ChEBI" id="CHEBI:15377"/>
        <dbReference type="ChEBI" id="CHEBI:57450"/>
        <dbReference type="ChEBI" id="CHEBI:57925"/>
        <dbReference type="ChEBI" id="CHEBI:58297"/>
        <dbReference type="ChEBI" id="CHEBI:90632"/>
    </reaction>
    <physiologicalReaction direction="left-to-right" evidence="3">
        <dbReference type="Rhea" id="RHEA:48621"/>
    </physiologicalReaction>
</comment>
<comment type="catalytic activity">
    <reaction evidence="10">
        <text>(12S)-hydroperoxy-(5Z,8Z,10E,14Z)-eicosatetraenoate + 2 glutathione = (12S)-hydroxy-(5Z,8Z,10E,14Z)-eicosatetraenoate + glutathione disulfide + H2O</text>
        <dbReference type="Rhea" id="RHEA:50708"/>
        <dbReference type="ChEBI" id="CHEBI:15377"/>
        <dbReference type="ChEBI" id="CHEBI:57444"/>
        <dbReference type="ChEBI" id="CHEBI:57925"/>
        <dbReference type="ChEBI" id="CHEBI:58297"/>
        <dbReference type="ChEBI" id="CHEBI:90680"/>
    </reaction>
    <physiologicalReaction direction="left-to-right" evidence="17">
        <dbReference type="Rhea" id="RHEA:50709"/>
    </physiologicalReaction>
</comment>
<comment type="catalytic activity">
    <reaction evidence="3">
        <text>(12R)-hydroperoxy-(5Z,8Z,10E,14Z)-eicosatetraenoate + 2 glutathione = (12R)-hydroxy-(5Z,8Z,10E,14Z)-eicosatetraenoate + glutathione disulfide + H2O</text>
        <dbReference type="Rhea" id="RHEA:76691"/>
        <dbReference type="ChEBI" id="CHEBI:15377"/>
        <dbReference type="ChEBI" id="CHEBI:57925"/>
        <dbReference type="ChEBI" id="CHEBI:58297"/>
        <dbReference type="ChEBI" id="CHEBI:75230"/>
        <dbReference type="ChEBI" id="CHEBI:83343"/>
    </reaction>
    <physiologicalReaction direction="left-to-right" evidence="3">
        <dbReference type="Rhea" id="RHEA:76692"/>
    </physiologicalReaction>
</comment>
<comment type="catalytic activity">
    <reaction evidence="3">
        <text>(15S)-hydroperoxy-(5Z,8Z,11Z,13E)-eicosatetraenoate + 2 glutathione = (15S)-hydroxy-(5Z,8Z,11Z,13E)-eicosatetraenoate + glutathione disulfide + H2O</text>
        <dbReference type="Rhea" id="RHEA:76695"/>
        <dbReference type="ChEBI" id="CHEBI:15377"/>
        <dbReference type="ChEBI" id="CHEBI:57409"/>
        <dbReference type="ChEBI" id="CHEBI:57446"/>
        <dbReference type="ChEBI" id="CHEBI:57925"/>
        <dbReference type="ChEBI" id="CHEBI:58297"/>
    </reaction>
    <physiologicalReaction direction="left-to-right" evidence="3">
        <dbReference type="Rhea" id="RHEA:76696"/>
    </physiologicalReaction>
</comment>
<comment type="catalytic activity">
    <reaction evidence="3">
        <text>(5S)-hydroperoxy-(6E,8Z,11Z,14Z,17Z)-eicosapentaenoate + 2 glutathione = (5S)-hydroxy-(6E,8Z,11Z,14Z,17Z)-eicosapentaenoate + glutathione disulfide + H2O</text>
        <dbReference type="Rhea" id="RHEA:76699"/>
        <dbReference type="ChEBI" id="CHEBI:15377"/>
        <dbReference type="ChEBI" id="CHEBI:57925"/>
        <dbReference type="ChEBI" id="CHEBI:58297"/>
        <dbReference type="ChEBI" id="CHEBI:195399"/>
        <dbReference type="ChEBI" id="CHEBI:195400"/>
    </reaction>
    <physiologicalReaction direction="left-to-right" evidence="3">
        <dbReference type="Rhea" id="RHEA:76700"/>
    </physiologicalReaction>
</comment>
<comment type="catalytic activity">
    <reaction evidence="3">
        <text>(12S)-hydroperoxy-(5Z,8Z,10E,14Z,17Z)-eicosapentaenoate + 2 glutathione = (12S)-hydroxy-(5Z,8Z,10E,14Z,17Z)-eicosapentaenoate + glutathione disulfide + H2O</text>
        <dbReference type="Rhea" id="RHEA:76703"/>
        <dbReference type="ChEBI" id="CHEBI:15377"/>
        <dbReference type="ChEBI" id="CHEBI:57925"/>
        <dbReference type="ChEBI" id="CHEBI:58297"/>
        <dbReference type="ChEBI" id="CHEBI:90772"/>
        <dbReference type="ChEBI" id="CHEBI:195401"/>
    </reaction>
    <physiologicalReaction direction="left-to-right" evidence="3">
        <dbReference type="Rhea" id="RHEA:76704"/>
    </physiologicalReaction>
</comment>
<comment type="catalytic activity">
    <reaction evidence="3">
        <text>(15S)-hydroperoxy-(5Z,8Z,11Z,13E,17Z)-eicosapentaenoate + 2 glutathione = (15S)-hydroxy-(5Z,8Z,11Z,13E,17Z)-eicosapentaenoate + glutathione disulfide + H2O</text>
        <dbReference type="Rhea" id="RHEA:76707"/>
        <dbReference type="ChEBI" id="CHEBI:15377"/>
        <dbReference type="ChEBI" id="CHEBI:57925"/>
        <dbReference type="ChEBI" id="CHEBI:58297"/>
        <dbReference type="ChEBI" id="CHEBI:132087"/>
        <dbReference type="ChEBI" id="CHEBI:194369"/>
    </reaction>
    <physiologicalReaction direction="left-to-right" evidence="3">
        <dbReference type="Rhea" id="RHEA:76708"/>
    </physiologicalReaction>
</comment>
<comment type="catalytic activity">
    <reaction evidence="3">
        <text>(15S)-hydroperoxy-(11Z,13E)-eicosadienoate + 2 glutathione = (15S)-hydroxy-(11Z,13E)-eicosadienoate + glutathione disulfide + H2O</text>
        <dbReference type="Rhea" id="RHEA:76711"/>
        <dbReference type="ChEBI" id="CHEBI:15377"/>
        <dbReference type="ChEBI" id="CHEBI:57925"/>
        <dbReference type="ChEBI" id="CHEBI:58297"/>
        <dbReference type="ChEBI" id="CHEBI:144832"/>
        <dbReference type="ChEBI" id="CHEBI:195402"/>
    </reaction>
    <physiologicalReaction direction="left-to-right" evidence="3">
        <dbReference type="Rhea" id="RHEA:76712"/>
    </physiologicalReaction>
</comment>
<comment type="catalytic activity">
    <reaction evidence="3">
        <text>(17S)-hydroperoxy-(4Z,7Z,10Z,13Z,15E,19Z)-docosahexaenoate + 2 glutathione = (17S)-hydroxy-(4Z,7Z,10Z,13Z,15E,19Z)-docosahexaenoate + glutathione disulfide + H2O</text>
        <dbReference type="Rhea" id="RHEA:76715"/>
        <dbReference type="ChEBI" id="CHEBI:15377"/>
        <dbReference type="ChEBI" id="CHEBI:57925"/>
        <dbReference type="ChEBI" id="CHEBI:58297"/>
        <dbReference type="ChEBI" id="CHEBI:133795"/>
        <dbReference type="ChEBI" id="CHEBI:195403"/>
    </reaction>
    <physiologicalReaction direction="left-to-right" evidence="3">
        <dbReference type="Rhea" id="RHEA:76716"/>
    </physiologicalReaction>
</comment>
<comment type="biophysicochemical properties">
    <kinetics>
        <KM evidence="6">14 uM for H(2)O(2) (at 25 degrees Celsius, in 0.1 M phosphate buffer, pH 7.0)</KM>
        <KM evidence="6">29 uM for tert-butylperoxide (at 25 degrees Celsius, in 0.1 M phosphate buffer, pH 7.0)</KM>
        <Vmax evidence="6">319.0 mM/min/mg enzyme toward H(2)O(2) (at 25 degrees Celsius, in 0.1 M phosphate buffer, pH 7.0)</Vmax>
        <Vmax evidence="6">182.0 mM/min/mg enzyme toward tert-butylperoxide (at 25 degrees Celsius, in 0.1 M phosphate buffer, pH 7.0)</Vmax>
    </kinetics>
</comment>
<comment type="subunit">
    <text evidence="5">Homotetramer. Interacts with MIEN1.</text>
</comment>
<comment type="subcellular location">
    <subcellularLocation>
        <location evidence="4 9">Cytoplasm</location>
    </subcellularLocation>
    <subcellularLocation>
        <location evidence="4 9">Mitochondrion</location>
    </subcellularLocation>
</comment>
<comment type="tissue specificity">
    <text evidence="4 9 10 11">Expressed in liver, kidney, lung, brain and heart.</text>
</comment>
<comment type="PTM">
    <text evidence="6">During periods of oxidative stress, Sec-47 may react with a superoxide radical, irreversibly lose hydroselenide and be converted to dehydroalanine.</text>
</comment>
<comment type="disruption phenotype">
    <text evidence="4 10 11">Mutants are healthy, fertile and show no increased sensitivity to hyperoxia (PubMed:9195979). Mice display enhanced susceptibility to paraquat and cortical neurons from Gpx1-deficient mice are more susceptible to H2O2-mediated toxicity than neurons from wild-type mice (PubMed:9712879). Gpx1-deficient mice are smaller than wild type littermates and the liver has increased mitochondrial H2O2 production, increased lipid peroxides, and decreased mitochondrial energy output (PubMed:10754271).</text>
</comment>
<comment type="miscellaneous">
    <text evidence="14">In the absence of Sod1, Gpx1 in the liver undergoes a 40% reduction in catalytic activity as a result of the decomposition of Sec-47 to dehydroalanine.</text>
</comment>
<comment type="similarity">
    <text evidence="13">Belongs to the glutathione peroxidase family.</text>
</comment>
<comment type="caution">
    <text evidence="13">PubMed:2771650 sequence was originally thought to originate from human.</text>
</comment>
<comment type="sequence caution" evidence="13">
    <conflict type="miscellaneous discrepancy">
        <sequence resource="EMBL-CDS" id="CAB43535"/>
    </conflict>
    <text>Number of sequencing artifacts.</text>
</comment>
<protein>
    <recommendedName>
        <fullName evidence="13">Glutathione peroxidase 1</fullName>
        <shortName>GPx-1</shortName>
        <shortName>GSHPx-1</shortName>
        <ecNumber evidence="4 6 8 9 11 17">1.11.1.9</ecNumber>
    </recommendedName>
    <alternativeName>
        <fullName>Cellular glutathione peroxidase</fullName>
    </alternativeName>
    <alternativeName>
        <fullName evidence="12">Phospholipid-hydroperoxide glutathione peroxidase GPX1</fullName>
        <ecNumber evidence="8 10">1.11.1.12</ecNumber>
    </alternativeName>
    <alternativeName>
        <fullName>Selenium-dependent glutathione peroxidase 1</fullName>
    </alternativeName>
</protein>
<dbReference type="EC" id="1.11.1.9" evidence="4 6 8 9 11 17"/>
<dbReference type="EC" id="1.11.1.12" evidence="8 10"/>
<dbReference type="EMBL" id="X03920">
    <property type="protein sequence ID" value="CAA27558.1"/>
    <property type="molecule type" value="Genomic_DNA"/>
</dbReference>
<dbReference type="EMBL" id="AK002245">
    <property type="protein sequence ID" value="BAC55244.1"/>
    <property type="molecule type" value="mRNA"/>
</dbReference>
<dbReference type="EMBL" id="AK010999">
    <property type="protein sequence ID" value="BAC55252.1"/>
    <property type="molecule type" value="mRNA"/>
</dbReference>
<dbReference type="EMBL" id="AK011019">
    <property type="protein sequence ID" value="BAC55253.1"/>
    <property type="molecule type" value="mRNA"/>
</dbReference>
<dbReference type="EMBL" id="AK028171">
    <property type="protein sequence ID" value="BAC55257.1"/>
    <property type="molecule type" value="mRNA"/>
</dbReference>
<dbReference type="EMBL" id="AK150548">
    <property type="protein sequence ID" value="BAE29650.1"/>
    <property type="molecule type" value="mRNA"/>
</dbReference>
<dbReference type="EMBL" id="AK154833">
    <property type="protein sequence ID" value="BAE32862.1"/>
    <property type="molecule type" value="mRNA"/>
</dbReference>
<dbReference type="EMBL" id="AK160388">
    <property type="protein sequence ID" value="BAE35760.1"/>
    <property type="molecule type" value="mRNA"/>
</dbReference>
<dbReference type="EMBL" id="BC086649">
    <property type="protein sequence ID" value="AAH86649.1"/>
    <property type="molecule type" value="mRNA"/>
</dbReference>
<dbReference type="EMBL" id="X15667">
    <property type="protein sequence ID" value="CAB43535.1"/>
    <property type="status" value="ALT_SEQ"/>
    <property type="molecule type" value="mRNA"/>
</dbReference>
<dbReference type="CCDS" id="CCDS23522.1"/>
<dbReference type="PIR" id="A25106">
    <property type="entry name" value="OPMSE"/>
</dbReference>
<dbReference type="PIR" id="S05317">
    <property type="entry name" value="S05317"/>
</dbReference>
<dbReference type="RefSeq" id="NP_001316456.1">
    <property type="nucleotide sequence ID" value="NM_001329527.1"/>
</dbReference>
<dbReference type="RefSeq" id="NP_001316457.1">
    <property type="nucleotide sequence ID" value="NM_001329528.1"/>
</dbReference>
<dbReference type="RefSeq" id="NP_032186.2">
    <property type="nucleotide sequence ID" value="NM_008160.6"/>
</dbReference>
<dbReference type="BioGRID" id="200037">
    <property type="interactions" value="8"/>
</dbReference>
<dbReference type="FunCoup" id="P11352">
    <property type="interactions" value="1482"/>
</dbReference>
<dbReference type="IntAct" id="P11352">
    <property type="interactions" value="4"/>
</dbReference>
<dbReference type="STRING" id="10090.ENSMUSP00000081010"/>
<dbReference type="SwissLipids" id="SLP:000001635"/>
<dbReference type="PeroxiBase" id="3709">
    <property type="entry name" value="MmGPx01"/>
</dbReference>
<dbReference type="GlyGen" id="P11352">
    <property type="glycosylation" value="3 sites, 1 O-linked glycan (1 site)"/>
</dbReference>
<dbReference type="iPTMnet" id="P11352"/>
<dbReference type="PhosphoSitePlus" id="P11352"/>
<dbReference type="SwissPalm" id="P11352"/>
<dbReference type="REPRODUCTION-2DPAGE" id="IPI00319652"/>
<dbReference type="REPRODUCTION-2DPAGE" id="P11352"/>
<dbReference type="CPTAC" id="non-CPTAC-3983"/>
<dbReference type="jPOST" id="P11352"/>
<dbReference type="PaxDb" id="10090-ENSMUSP00000081010"/>
<dbReference type="PeptideAtlas" id="P11352"/>
<dbReference type="ProteomicsDB" id="269627"/>
<dbReference type="Pumba" id="P11352"/>
<dbReference type="Antibodypedia" id="39716">
    <property type="antibodies" value="542 antibodies from 40 providers"/>
</dbReference>
<dbReference type="DNASU" id="14775"/>
<dbReference type="Ensembl" id="ENSMUST00000082429.8">
    <property type="protein sequence ID" value="ENSMUSP00000081010.7"/>
    <property type="gene ID" value="ENSMUSG00000063856.9"/>
</dbReference>
<dbReference type="GeneID" id="14775"/>
<dbReference type="KEGG" id="mmu:14775"/>
<dbReference type="UCSC" id="uc009rpf.3">
    <property type="organism name" value="mouse"/>
</dbReference>
<dbReference type="AGR" id="MGI:104887"/>
<dbReference type="CTD" id="2876"/>
<dbReference type="MGI" id="MGI:104887">
    <property type="gene designation" value="Gpx1"/>
</dbReference>
<dbReference type="VEuPathDB" id="HostDB:ENSMUSG00000063856"/>
<dbReference type="eggNOG" id="KOG1651">
    <property type="taxonomic scope" value="Eukaryota"/>
</dbReference>
<dbReference type="GeneTree" id="ENSGT00940000156150"/>
<dbReference type="InParanoid" id="P11352"/>
<dbReference type="OMA" id="RDYTEMN"/>
<dbReference type="OrthoDB" id="446890at2759"/>
<dbReference type="PhylomeDB" id="P11352"/>
<dbReference type="TreeFam" id="TF105318"/>
<dbReference type="Reactome" id="R-MMU-2142712">
    <property type="pathway name" value="Synthesis of 12-eicosatetraenoic acid derivatives"/>
</dbReference>
<dbReference type="Reactome" id="R-MMU-2142770">
    <property type="pathway name" value="Synthesis of 15-eicosatetraenoic acid derivatives"/>
</dbReference>
<dbReference type="Reactome" id="R-MMU-3299685">
    <property type="pathway name" value="Detoxification of Reactive Oxygen Species"/>
</dbReference>
<dbReference type="SABIO-RK" id="P11352"/>
<dbReference type="BioGRID-ORCS" id="14775">
    <property type="hits" value="6 hits in 81 CRISPR screens"/>
</dbReference>
<dbReference type="ChiTaRS" id="Gpx1">
    <property type="organism name" value="mouse"/>
</dbReference>
<dbReference type="PRO" id="PR:P11352"/>
<dbReference type="Proteomes" id="UP000000589">
    <property type="component" value="Chromosome 9"/>
</dbReference>
<dbReference type="RNAct" id="P11352">
    <property type="molecule type" value="protein"/>
</dbReference>
<dbReference type="Bgee" id="ENSMUSG00000063856">
    <property type="expression patterns" value="Expressed in fetal liver hematopoietic progenitor cell and 259 other cell types or tissues"/>
</dbReference>
<dbReference type="ExpressionAtlas" id="P11352">
    <property type="expression patterns" value="baseline and differential"/>
</dbReference>
<dbReference type="GO" id="GO:0005737">
    <property type="term" value="C:cytoplasm"/>
    <property type="evidence" value="ECO:0000250"/>
    <property type="project" value="BHF-UCL"/>
</dbReference>
<dbReference type="GO" id="GO:0005829">
    <property type="term" value="C:cytosol"/>
    <property type="evidence" value="ECO:0000314"/>
    <property type="project" value="UniProtKB"/>
</dbReference>
<dbReference type="GO" id="GO:0097413">
    <property type="term" value="C:Lewy body"/>
    <property type="evidence" value="ECO:0007669"/>
    <property type="project" value="Ensembl"/>
</dbReference>
<dbReference type="GO" id="GO:0005739">
    <property type="term" value="C:mitochondrion"/>
    <property type="evidence" value="ECO:0000314"/>
    <property type="project" value="MGI"/>
</dbReference>
<dbReference type="GO" id="GO:0004602">
    <property type="term" value="F:glutathione peroxidase activity"/>
    <property type="evidence" value="ECO:0000314"/>
    <property type="project" value="MGI"/>
</dbReference>
<dbReference type="GO" id="GO:0004601">
    <property type="term" value="F:peroxidase activity"/>
    <property type="evidence" value="ECO:0000314"/>
    <property type="project" value="UniProtKB"/>
</dbReference>
<dbReference type="GO" id="GO:0047066">
    <property type="term" value="F:phospholipid-hydroperoxide glutathione peroxidase activity"/>
    <property type="evidence" value="ECO:0000250"/>
    <property type="project" value="UniProtKB"/>
</dbReference>
<dbReference type="GO" id="GO:1990782">
    <property type="term" value="F:protein tyrosine kinase binding"/>
    <property type="evidence" value="ECO:0007669"/>
    <property type="project" value="Ensembl"/>
</dbReference>
<dbReference type="GO" id="GO:0017124">
    <property type="term" value="F:SH3 domain binding"/>
    <property type="evidence" value="ECO:0007669"/>
    <property type="project" value="Ensembl"/>
</dbReference>
<dbReference type="GO" id="GO:0060055">
    <property type="term" value="P:angiogenesis involved in wound healing"/>
    <property type="evidence" value="ECO:0000315"/>
    <property type="project" value="MGI"/>
</dbReference>
<dbReference type="GO" id="GO:0006915">
    <property type="term" value="P:apoptotic process"/>
    <property type="evidence" value="ECO:0000315"/>
    <property type="project" value="MGI"/>
</dbReference>
<dbReference type="GO" id="GO:0019369">
    <property type="term" value="P:arachidonate metabolic process"/>
    <property type="evidence" value="ECO:0000315"/>
    <property type="project" value="UniProtKB"/>
</dbReference>
<dbReference type="GO" id="GO:0051702">
    <property type="term" value="P:biological process involved in interaction with symbiont"/>
    <property type="evidence" value="ECO:0000316"/>
    <property type="project" value="MGI"/>
</dbReference>
<dbReference type="GO" id="GO:0043534">
    <property type="term" value="P:blood vessel endothelial cell migration"/>
    <property type="evidence" value="ECO:0000315"/>
    <property type="project" value="MGI"/>
</dbReference>
<dbReference type="GO" id="GO:0045454">
    <property type="term" value="P:cell redox homeostasis"/>
    <property type="evidence" value="ECO:0007669"/>
    <property type="project" value="Ensembl"/>
</dbReference>
<dbReference type="GO" id="GO:0071333">
    <property type="term" value="P:cellular response to glucose stimulus"/>
    <property type="evidence" value="ECO:0007669"/>
    <property type="project" value="Ensembl"/>
</dbReference>
<dbReference type="GO" id="GO:0034599">
    <property type="term" value="P:cellular response to oxidative stress"/>
    <property type="evidence" value="ECO:0007669"/>
    <property type="project" value="Ensembl"/>
</dbReference>
<dbReference type="GO" id="GO:0001885">
    <property type="term" value="P:endothelial cell development"/>
    <property type="evidence" value="ECO:0000315"/>
    <property type="project" value="MGI"/>
</dbReference>
<dbReference type="GO" id="GO:0040029">
    <property type="term" value="P:epigenetic regulation of gene expression"/>
    <property type="evidence" value="ECO:0007669"/>
    <property type="project" value="Ensembl"/>
</dbReference>
<dbReference type="GO" id="GO:0045444">
    <property type="term" value="P:fat cell differentiation"/>
    <property type="evidence" value="ECO:0000315"/>
    <property type="project" value="MGI"/>
</dbReference>
<dbReference type="GO" id="GO:0048144">
    <property type="term" value="P:fibroblast proliferation"/>
    <property type="evidence" value="ECO:0000315"/>
    <property type="project" value="MGI"/>
</dbReference>
<dbReference type="GO" id="GO:0006749">
    <property type="term" value="P:glutathione metabolic process"/>
    <property type="evidence" value="ECO:0007669"/>
    <property type="project" value="Ensembl"/>
</dbReference>
<dbReference type="GO" id="GO:0060047">
    <property type="term" value="P:heart contraction"/>
    <property type="evidence" value="ECO:0000315"/>
    <property type="project" value="MGI"/>
</dbReference>
<dbReference type="GO" id="GO:0042744">
    <property type="term" value="P:hydrogen peroxide catabolic process"/>
    <property type="evidence" value="ECO:0000315"/>
    <property type="project" value="MGI"/>
</dbReference>
<dbReference type="GO" id="GO:0008631">
    <property type="term" value="P:intrinsic apoptotic signaling pathway in response to oxidative stress"/>
    <property type="evidence" value="ECO:0000315"/>
    <property type="project" value="MGI"/>
</dbReference>
<dbReference type="GO" id="GO:0006629">
    <property type="term" value="P:lipid metabolic process"/>
    <property type="evidence" value="ECO:0000315"/>
    <property type="project" value="MGI"/>
</dbReference>
<dbReference type="GO" id="GO:0019372">
    <property type="term" value="P:lipoxygenase pathway"/>
    <property type="evidence" value="ECO:0000250"/>
    <property type="project" value="UniProtKB"/>
</dbReference>
<dbReference type="GO" id="GO:0045445">
    <property type="term" value="P:myoblast differentiation"/>
    <property type="evidence" value="ECO:0000315"/>
    <property type="project" value="MGI"/>
</dbReference>
<dbReference type="GO" id="GO:0051450">
    <property type="term" value="P:myoblast proliferation"/>
    <property type="evidence" value="ECO:0000315"/>
    <property type="project" value="MGI"/>
</dbReference>
<dbReference type="GO" id="GO:0014902">
    <property type="term" value="P:myotube differentiation"/>
    <property type="evidence" value="ECO:0000315"/>
    <property type="project" value="MGI"/>
</dbReference>
<dbReference type="GO" id="GO:1902042">
    <property type="term" value="P:negative regulation of extrinsic apoptotic signaling pathway via death domain receptors"/>
    <property type="evidence" value="ECO:0007669"/>
    <property type="project" value="Ensembl"/>
</dbReference>
<dbReference type="GO" id="GO:0002862">
    <property type="term" value="P:negative regulation of inflammatory response to antigenic stimulus"/>
    <property type="evidence" value="ECO:0000316"/>
    <property type="project" value="MGI"/>
</dbReference>
<dbReference type="GO" id="GO:1902176">
    <property type="term" value="P:negative regulation of oxidative stress-induced intrinsic apoptotic signaling pathway"/>
    <property type="evidence" value="ECO:0000315"/>
    <property type="project" value="MGI"/>
</dbReference>
<dbReference type="GO" id="GO:0090201">
    <property type="term" value="P:negative regulation of release of cytochrome c from mitochondria"/>
    <property type="evidence" value="ECO:0007669"/>
    <property type="project" value="Ensembl"/>
</dbReference>
<dbReference type="GO" id="GO:0051402">
    <property type="term" value="P:neuron apoptotic process"/>
    <property type="evidence" value="ECO:0000315"/>
    <property type="project" value="MGI"/>
</dbReference>
<dbReference type="GO" id="GO:0051897">
    <property type="term" value="P:positive regulation of phosphatidylinositol 3-kinase/protein kinase B signal transduction"/>
    <property type="evidence" value="ECO:0000315"/>
    <property type="project" value="MGI"/>
</dbReference>
<dbReference type="GO" id="GO:0033599">
    <property type="term" value="P:regulation of mammary gland epithelial cell proliferation"/>
    <property type="evidence" value="ECO:0007669"/>
    <property type="project" value="Ensembl"/>
</dbReference>
<dbReference type="GO" id="GO:0061136">
    <property type="term" value="P:regulation of proteasomal protein catabolic process"/>
    <property type="evidence" value="ECO:0007669"/>
    <property type="project" value="Ensembl"/>
</dbReference>
<dbReference type="GO" id="GO:0032355">
    <property type="term" value="P:response to estradiol"/>
    <property type="evidence" value="ECO:0007669"/>
    <property type="project" value="Ensembl"/>
</dbReference>
<dbReference type="GO" id="GO:0051593">
    <property type="term" value="P:response to folic acid"/>
    <property type="evidence" value="ECO:0007669"/>
    <property type="project" value="Ensembl"/>
</dbReference>
<dbReference type="GO" id="GO:0010332">
    <property type="term" value="P:response to gamma radiation"/>
    <property type="evidence" value="ECO:0000316"/>
    <property type="project" value="MGI"/>
</dbReference>
<dbReference type="GO" id="GO:0009725">
    <property type="term" value="P:response to hormone"/>
    <property type="evidence" value="ECO:0007669"/>
    <property type="project" value="Ensembl"/>
</dbReference>
<dbReference type="GO" id="GO:0042542">
    <property type="term" value="P:response to hydrogen peroxide"/>
    <property type="evidence" value="ECO:0000315"/>
    <property type="project" value="MGI"/>
</dbReference>
<dbReference type="GO" id="GO:0033194">
    <property type="term" value="P:response to hydroperoxide"/>
    <property type="evidence" value="ECO:0000315"/>
    <property type="project" value="MGI"/>
</dbReference>
<dbReference type="GO" id="GO:0032496">
    <property type="term" value="P:response to lipopolysaccharide"/>
    <property type="evidence" value="ECO:0000314"/>
    <property type="project" value="MGI"/>
</dbReference>
<dbReference type="GO" id="GO:0035094">
    <property type="term" value="P:response to nicotine"/>
    <property type="evidence" value="ECO:0007669"/>
    <property type="project" value="Ensembl"/>
</dbReference>
<dbReference type="GO" id="GO:0006979">
    <property type="term" value="P:response to oxidative stress"/>
    <property type="evidence" value="ECO:0000315"/>
    <property type="project" value="MGI"/>
</dbReference>
<dbReference type="GO" id="GO:0000302">
    <property type="term" value="P:response to reactive oxygen species"/>
    <property type="evidence" value="ECO:0000315"/>
    <property type="project" value="MGI"/>
</dbReference>
<dbReference type="GO" id="GO:0010269">
    <property type="term" value="P:response to selenium ion"/>
    <property type="evidence" value="ECO:0007669"/>
    <property type="project" value="Ensembl"/>
</dbReference>
<dbReference type="GO" id="GO:0009609">
    <property type="term" value="P:response to symbiotic bacterium"/>
    <property type="evidence" value="ECO:0000316"/>
    <property type="project" value="MGI"/>
</dbReference>
<dbReference type="GO" id="GO:0009636">
    <property type="term" value="P:response to toxic substance"/>
    <property type="evidence" value="ECO:0000315"/>
    <property type="project" value="MGI"/>
</dbReference>
<dbReference type="GO" id="GO:0033197">
    <property type="term" value="P:response to vitamin E"/>
    <property type="evidence" value="ECO:0007669"/>
    <property type="project" value="Ensembl"/>
</dbReference>
<dbReference type="GO" id="GO:0009611">
    <property type="term" value="P:response to wounding"/>
    <property type="evidence" value="ECO:0000315"/>
    <property type="project" value="MGI"/>
</dbReference>
<dbReference type="GO" id="GO:0009410">
    <property type="term" value="P:response to xenobiotic stimulus"/>
    <property type="evidence" value="ECO:0000315"/>
    <property type="project" value="MGI"/>
</dbReference>
<dbReference type="GO" id="GO:0007605">
    <property type="term" value="P:sensory perception of sound"/>
    <property type="evidence" value="ECO:0000315"/>
    <property type="project" value="MGI"/>
</dbReference>
<dbReference type="GO" id="GO:0048741">
    <property type="term" value="P:skeletal muscle fiber development"/>
    <property type="evidence" value="ECO:0000315"/>
    <property type="project" value="MGI"/>
</dbReference>
<dbReference type="GO" id="GO:0043403">
    <property type="term" value="P:skeletal muscle tissue regeneration"/>
    <property type="evidence" value="ECO:0000315"/>
    <property type="project" value="MGI"/>
</dbReference>
<dbReference type="GO" id="GO:0001659">
    <property type="term" value="P:temperature homeostasis"/>
    <property type="evidence" value="ECO:0000316"/>
    <property type="project" value="MGI"/>
</dbReference>
<dbReference type="GO" id="GO:0006641">
    <property type="term" value="P:triglyceride metabolic process"/>
    <property type="evidence" value="ECO:0000315"/>
    <property type="project" value="MGI"/>
</dbReference>
<dbReference type="GO" id="GO:0009650">
    <property type="term" value="P:UV protection"/>
    <property type="evidence" value="ECO:0007669"/>
    <property type="project" value="Ensembl"/>
</dbReference>
<dbReference type="GO" id="GO:0042311">
    <property type="term" value="P:vasodilation"/>
    <property type="evidence" value="ECO:0000315"/>
    <property type="project" value="MGI"/>
</dbReference>
<dbReference type="CDD" id="cd00340">
    <property type="entry name" value="GSH_Peroxidase"/>
    <property type="match status" value="1"/>
</dbReference>
<dbReference type="FunFam" id="3.40.30.10:FF:000153">
    <property type="entry name" value="Glutathione peroxidase"/>
    <property type="match status" value="1"/>
</dbReference>
<dbReference type="Gene3D" id="3.40.30.10">
    <property type="entry name" value="Glutaredoxin"/>
    <property type="match status" value="1"/>
</dbReference>
<dbReference type="InterPro" id="IPR000889">
    <property type="entry name" value="Glutathione_peroxidase"/>
</dbReference>
<dbReference type="InterPro" id="IPR029759">
    <property type="entry name" value="GPX_AS"/>
</dbReference>
<dbReference type="InterPro" id="IPR029760">
    <property type="entry name" value="GPX_CS"/>
</dbReference>
<dbReference type="InterPro" id="IPR036249">
    <property type="entry name" value="Thioredoxin-like_sf"/>
</dbReference>
<dbReference type="PANTHER" id="PTHR11592">
    <property type="entry name" value="GLUTATHIONE PEROXIDASE"/>
    <property type="match status" value="1"/>
</dbReference>
<dbReference type="PANTHER" id="PTHR11592:SF41">
    <property type="entry name" value="GLUTATHIONE PEROXIDASE 1"/>
    <property type="match status" value="1"/>
</dbReference>
<dbReference type="Pfam" id="PF00255">
    <property type="entry name" value="GSHPx"/>
    <property type="match status" value="1"/>
</dbReference>
<dbReference type="PIRSF" id="PIRSF000303">
    <property type="entry name" value="Glutathion_perox"/>
    <property type="match status" value="1"/>
</dbReference>
<dbReference type="PRINTS" id="PR01011">
    <property type="entry name" value="GLUTPROXDASE"/>
</dbReference>
<dbReference type="SUPFAM" id="SSF52833">
    <property type="entry name" value="Thioredoxin-like"/>
    <property type="match status" value="1"/>
</dbReference>
<dbReference type="PROSITE" id="PS00460">
    <property type="entry name" value="GLUTATHIONE_PEROXID_1"/>
    <property type="match status" value="1"/>
</dbReference>
<dbReference type="PROSITE" id="PS00763">
    <property type="entry name" value="GLUTATHIONE_PEROXID_2"/>
    <property type="match status" value="1"/>
</dbReference>
<dbReference type="PROSITE" id="PS51355">
    <property type="entry name" value="GLUTATHIONE_PEROXID_3"/>
    <property type="match status" value="1"/>
</dbReference>